<name>PTH_RHOJR</name>
<comment type="function">
    <text evidence="1">Hydrolyzes ribosome-free peptidyl-tRNAs (with 1 or more amino acids incorporated), which drop off the ribosome during protein synthesis, or as a result of ribosome stalling.</text>
</comment>
<comment type="function">
    <text evidence="1">Catalyzes the release of premature peptidyl moieties from peptidyl-tRNA molecules trapped in stalled 50S ribosomal subunits, and thus maintains levels of free tRNAs and 50S ribosomes.</text>
</comment>
<comment type="catalytic activity">
    <reaction evidence="1">
        <text>an N-acyl-L-alpha-aminoacyl-tRNA + H2O = an N-acyl-L-amino acid + a tRNA + H(+)</text>
        <dbReference type="Rhea" id="RHEA:54448"/>
        <dbReference type="Rhea" id="RHEA-COMP:10123"/>
        <dbReference type="Rhea" id="RHEA-COMP:13883"/>
        <dbReference type="ChEBI" id="CHEBI:15377"/>
        <dbReference type="ChEBI" id="CHEBI:15378"/>
        <dbReference type="ChEBI" id="CHEBI:59874"/>
        <dbReference type="ChEBI" id="CHEBI:78442"/>
        <dbReference type="ChEBI" id="CHEBI:138191"/>
        <dbReference type="EC" id="3.1.1.29"/>
    </reaction>
</comment>
<comment type="subunit">
    <text evidence="1">Monomer.</text>
</comment>
<comment type="subcellular location">
    <subcellularLocation>
        <location evidence="1">Cytoplasm</location>
    </subcellularLocation>
</comment>
<comment type="similarity">
    <text evidence="1">Belongs to the PTH family.</text>
</comment>
<accession>Q0S4R3</accession>
<feature type="chain" id="PRO_0000264090" description="Peptidyl-tRNA hydrolase">
    <location>
        <begin position="1"/>
        <end position="190"/>
    </location>
</feature>
<feature type="active site" description="Proton acceptor" evidence="1">
    <location>
        <position position="23"/>
    </location>
</feature>
<feature type="binding site" evidence="1">
    <location>
        <position position="18"/>
    </location>
    <ligand>
        <name>tRNA</name>
        <dbReference type="ChEBI" id="CHEBI:17843"/>
    </ligand>
</feature>
<feature type="binding site" evidence="1">
    <location>
        <position position="69"/>
    </location>
    <ligand>
        <name>tRNA</name>
        <dbReference type="ChEBI" id="CHEBI:17843"/>
    </ligand>
</feature>
<feature type="binding site" evidence="1">
    <location>
        <position position="71"/>
    </location>
    <ligand>
        <name>tRNA</name>
        <dbReference type="ChEBI" id="CHEBI:17843"/>
    </ligand>
</feature>
<feature type="binding site" evidence="1">
    <location>
        <position position="117"/>
    </location>
    <ligand>
        <name>tRNA</name>
        <dbReference type="ChEBI" id="CHEBI:17843"/>
    </ligand>
</feature>
<feature type="site" description="Discriminates between blocked and unblocked aminoacyl-tRNA" evidence="1">
    <location>
        <position position="13"/>
    </location>
</feature>
<feature type="site" description="Stabilizes the basic form of H active site to accept a proton" evidence="1">
    <location>
        <position position="96"/>
    </location>
</feature>
<evidence type="ECO:0000255" key="1">
    <source>
        <dbReference type="HAMAP-Rule" id="MF_00083"/>
    </source>
</evidence>
<dbReference type="EC" id="3.1.1.29" evidence="1"/>
<dbReference type="EMBL" id="CP000431">
    <property type="protein sequence ID" value="ABG97473.1"/>
    <property type="molecule type" value="Genomic_DNA"/>
</dbReference>
<dbReference type="RefSeq" id="WP_011597821.1">
    <property type="nucleotide sequence ID" value="NC_008268.1"/>
</dbReference>
<dbReference type="SMR" id="Q0S4R3"/>
<dbReference type="KEGG" id="rha:RHA1_ro05694"/>
<dbReference type="PATRIC" id="fig|101510.16.peg.5738"/>
<dbReference type="eggNOG" id="COG0193">
    <property type="taxonomic scope" value="Bacteria"/>
</dbReference>
<dbReference type="HOGENOM" id="CLU_062456_2_2_11"/>
<dbReference type="OrthoDB" id="9800507at2"/>
<dbReference type="Proteomes" id="UP000008710">
    <property type="component" value="Chromosome"/>
</dbReference>
<dbReference type="GO" id="GO:0005737">
    <property type="term" value="C:cytoplasm"/>
    <property type="evidence" value="ECO:0007669"/>
    <property type="project" value="UniProtKB-SubCell"/>
</dbReference>
<dbReference type="GO" id="GO:0004045">
    <property type="term" value="F:peptidyl-tRNA hydrolase activity"/>
    <property type="evidence" value="ECO:0007669"/>
    <property type="project" value="UniProtKB-UniRule"/>
</dbReference>
<dbReference type="GO" id="GO:0000049">
    <property type="term" value="F:tRNA binding"/>
    <property type="evidence" value="ECO:0007669"/>
    <property type="project" value="UniProtKB-UniRule"/>
</dbReference>
<dbReference type="GO" id="GO:0006515">
    <property type="term" value="P:protein quality control for misfolded or incompletely synthesized proteins"/>
    <property type="evidence" value="ECO:0007669"/>
    <property type="project" value="UniProtKB-UniRule"/>
</dbReference>
<dbReference type="GO" id="GO:0072344">
    <property type="term" value="P:rescue of stalled ribosome"/>
    <property type="evidence" value="ECO:0007669"/>
    <property type="project" value="UniProtKB-UniRule"/>
</dbReference>
<dbReference type="CDD" id="cd00462">
    <property type="entry name" value="PTH"/>
    <property type="match status" value="1"/>
</dbReference>
<dbReference type="FunFam" id="3.40.50.1470:FF:000001">
    <property type="entry name" value="Peptidyl-tRNA hydrolase"/>
    <property type="match status" value="1"/>
</dbReference>
<dbReference type="Gene3D" id="3.40.50.1470">
    <property type="entry name" value="Peptidyl-tRNA hydrolase"/>
    <property type="match status" value="1"/>
</dbReference>
<dbReference type="HAMAP" id="MF_00083">
    <property type="entry name" value="Pept_tRNA_hydro_bact"/>
    <property type="match status" value="1"/>
</dbReference>
<dbReference type="InterPro" id="IPR001328">
    <property type="entry name" value="Pept_tRNA_hydro"/>
</dbReference>
<dbReference type="InterPro" id="IPR018171">
    <property type="entry name" value="Pept_tRNA_hydro_CS"/>
</dbReference>
<dbReference type="InterPro" id="IPR036416">
    <property type="entry name" value="Pept_tRNA_hydro_sf"/>
</dbReference>
<dbReference type="NCBIfam" id="TIGR00447">
    <property type="entry name" value="pth"/>
    <property type="match status" value="1"/>
</dbReference>
<dbReference type="PANTHER" id="PTHR17224">
    <property type="entry name" value="PEPTIDYL-TRNA HYDROLASE"/>
    <property type="match status" value="1"/>
</dbReference>
<dbReference type="PANTHER" id="PTHR17224:SF1">
    <property type="entry name" value="PEPTIDYL-TRNA HYDROLASE"/>
    <property type="match status" value="1"/>
</dbReference>
<dbReference type="Pfam" id="PF01195">
    <property type="entry name" value="Pept_tRNA_hydro"/>
    <property type="match status" value="1"/>
</dbReference>
<dbReference type="SUPFAM" id="SSF53178">
    <property type="entry name" value="Peptidyl-tRNA hydrolase-like"/>
    <property type="match status" value="1"/>
</dbReference>
<dbReference type="PROSITE" id="PS01196">
    <property type="entry name" value="PEPT_TRNA_HYDROL_2"/>
    <property type="match status" value="1"/>
</dbReference>
<gene>
    <name evidence="1" type="primary">pth</name>
    <name type="ordered locus">RHA1_ro05694</name>
</gene>
<protein>
    <recommendedName>
        <fullName evidence="1">Peptidyl-tRNA hydrolase</fullName>
        <shortName evidence="1">Pth</shortName>
        <ecNumber evidence="1">3.1.1.29</ecNumber>
    </recommendedName>
</protein>
<reference key="1">
    <citation type="journal article" date="2006" name="Proc. Natl. Acad. Sci. U.S.A.">
        <title>The complete genome of Rhodococcus sp. RHA1 provides insights into a catabolic powerhouse.</title>
        <authorList>
            <person name="McLeod M.P."/>
            <person name="Warren R.L."/>
            <person name="Hsiao W.W.L."/>
            <person name="Araki N."/>
            <person name="Myhre M."/>
            <person name="Fernandes C."/>
            <person name="Miyazawa D."/>
            <person name="Wong W."/>
            <person name="Lillquist A.L."/>
            <person name="Wang D."/>
            <person name="Dosanjh M."/>
            <person name="Hara H."/>
            <person name="Petrescu A."/>
            <person name="Morin R.D."/>
            <person name="Yang G."/>
            <person name="Stott J.M."/>
            <person name="Schein J.E."/>
            <person name="Shin H."/>
            <person name="Smailus D."/>
            <person name="Siddiqui A.S."/>
            <person name="Marra M.A."/>
            <person name="Jones S.J.M."/>
            <person name="Holt R."/>
            <person name="Brinkman F.S.L."/>
            <person name="Miyauchi K."/>
            <person name="Fukuda M."/>
            <person name="Davies J.E."/>
            <person name="Mohn W.W."/>
            <person name="Eltis L.D."/>
        </authorList>
    </citation>
    <scope>NUCLEOTIDE SEQUENCE [LARGE SCALE GENOMIC DNA]</scope>
    <source>
        <strain>RHA1</strain>
    </source>
</reference>
<proteinExistence type="inferred from homology"/>
<organism>
    <name type="scientific">Rhodococcus jostii (strain RHA1)</name>
    <dbReference type="NCBI Taxonomy" id="101510"/>
    <lineage>
        <taxon>Bacteria</taxon>
        <taxon>Bacillati</taxon>
        <taxon>Actinomycetota</taxon>
        <taxon>Actinomycetes</taxon>
        <taxon>Mycobacteriales</taxon>
        <taxon>Nocardiaceae</taxon>
        <taxon>Rhodococcus</taxon>
    </lineage>
</organism>
<sequence>MSEDTALVVGLGNPGPQYEKTRHNVGFMVAGVLSARMGGKFSAHKKSGAEIVQGRFEGRPTILAKPRSFMNLSGSAVAGLARFFSVDPGNIVVIHDELDLDFGTIRLKQGGGEGGHNGLRSISSALGTKDYLRTRVGIGRPPGRMDPASYVLKPFSSVERKELDLVCEESADAVELVLRVGLEAAQNRLH</sequence>
<keyword id="KW-0963">Cytoplasm</keyword>
<keyword id="KW-0378">Hydrolase</keyword>
<keyword id="KW-0694">RNA-binding</keyword>
<keyword id="KW-0820">tRNA-binding</keyword>